<feature type="chain" id="PRO_0000158422" description="Ribose-5-phosphate isomerase A">
    <location>
        <begin position="1"/>
        <end position="219"/>
    </location>
</feature>
<feature type="active site" description="Proton acceptor" evidence="1">
    <location>
        <position position="103"/>
    </location>
</feature>
<feature type="binding site" evidence="1">
    <location>
        <begin position="28"/>
        <end position="31"/>
    </location>
    <ligand>
        <name>substrate</name>
    </ligand>
</feature>
<feature type="binding site" evidence="1">
    <location>
        <begin position="81"/>
        <end position="84"/>
    </location>
    <ligand>
        <name>substrate</name>
    </ligand>
</feature>
<feature type="binding site" evidence="1">
    <location>
        <begin position="94"/>
        <end position="97"/>
    </location>
    <ligand>
        <name>substrate</name>
    </ligand>
</feature>
<feature type="binding site" evidence="1">
    <location>
        <position position="121"/>
    </location>
    <ligand>
        <name>substrate</name>
    </ligand>
</feature>
<keyword id="KW-0413">Isomerase</keyword>
<keyword id="KW-1185">Reference proteome</keyword>
<reference key="1">
    <citation type="submission" date="2003-06" db="EMBL/GenBank/DDBJ databases">
        <title>The complete genome sequence of Haemophilus ducreyi.</title>
        <authorList>
            <person name="Munson R.S. Jr."/>
            <person name="Ray W.C."/>
            <person name="Mahairas G."/>
            <person name="Sabo P."/>
            <person name="Mungur R."/>
            <person name="Johnson L."/>
            <person name="Nguyen D."/>
            <person name="Wang J."/>
            <person name="Forst C."/>
            <person name="Hood L."/>
        </authorList>
    </citation>
    <scope>NUCLEOTIDE SEQUENCE [LARGE SCALE GENOMIC DNA]</scope>
    <source>
        <strain>35000HP / ATCC 700724</strain>
    </source>
</reference>
<evidence type="ECO:0000255" key="1">
    <source>
        <dbReference type="HAMAP-Rule" id="MF_00170"/>
    </source>
</evidence>
<gene>
    <name evidence="1" type="primary">rpiA</name>
    <name type="ordered locus">HD_0199</name>
</gene>
<sequence>MTQQEMKKIAAQAALQFVKPDTIIGVGSGSTVNCFIDALASIKDEIKGAVAASKASEDQLRAMGIEVFNANEVAGLDVYIDGADEITPQGAMIKGGGAALTREKIVSSLAKQFICMVDSSKQVDVLGSSFPLPVEVIPMARSYVARQLVALGGSPEYREGVVTDNGNVILDVHNFNIYEPLKMEHTINNIAGVVTNGIFAQRYANIIIVGTAEGAKIIK</sequence>
<accession>Q7VP95</accession>
<name>RPIA_HAEDU</name>
<dbReference type="EC" id="5.3.1.6" evidence="1"/>
<dbReference type="EMBL" id="AE017143">
    <property type="protein sequence ID" value="AAP95192.1"/>
    <property type="molecule type" value="Genomic_DNA"/>
</dbReference>
<dbReference type="RefSeq" id="WP_010944246.1">
    <property type="nucleotide sequence ID" value="NC_002940.2"/>
</dbReference>
<dbReference type="SMR" id="Q7VP95"/>
<dbReference type="STRING" id="233412.HD_0199"/>
<dbReference type="KEGG" id="hdu:HD_0199"/>
<dbReference type="eggNOG" id="COG0120">
    <property type="taxonomic scope" value="Bacteria"/>
</dbReference>
<dbReference type="HOGENOM" id="CLU_056590_1_1_6"/>
<dbReference type="OrthoDB" id="5870696at2"/>
<dbReference type="UniPathway" id="UPA00115">
    <property type="reaction ID" value="UER00412"/>
</dbReference>
<dbReference type="Proteomes" id="UP000001022">
    <property type="component" value="Chromosome"/>
</dbReference>
<dbReference type="GO" id="GO:0005829">
    <property type="term" value="C:cytosol"/>
    <property type="evidence" value="ECO:0007669"/>
    <property type="project" value="TreeGrafter"/>
</dbReference>
<dbReference type="GO" id="GO:0004751">
    <property type="term" value="F:ribose-5-phosphate isomerase activity"/>
    <property type="evidence" value="ECO:0007669"/>
    <property type="project" value="UniProtKB-UniRule"/>
</dbReference>
<dbReference type="GO" id="GO:0006014">
    <property type="term" value="P:D-ribose metabolic process"/>
    <property type="evidence" value="ECO:0007669"/>
    <property type="project" value="TreeGrafter"/>
</dbReference>
<dbReference type="GO" id="GO:0009052">
    <property type="term" value="P:pentose-phosphate shunt, non-oxidative branch"/>
    <property type="evidence" value="ECO:0007669"/>
    <property type="project" value="UniProtKB-UniRule"/>
</dbReference>
<dbReference type="CDD" id="cd01398">
    <property type="entry name" value="RPI_A"/>
    <property type="match status" value="1"/>
</dbReference>
<dbReference type="FunFam" id="3.30.70.260:FF:000004">
    <property type="entry name" value="Ribose-5-phosphate isomerase A"/>
    <property type="match status" value="1"/>
</dbReference>
<dbReference type="FunFam" id="3.40.50.1360:FF:000001">
    <property type="entry name" value="Ribose-5-phosphate isomerase A"/>
    <property type="match status" value="1"/>
</dbReference>
<dbReference type="Gene3D" id="3.30.70.260">
    <property type="match status" value="1"/>
</dbReference>
<dbReference type="Gene3D" id="3.40.50.1360">
    <property type="match status" value="1"/>
</dbReference>
<dbReference type="HAMAP" id="MF_00170">
    <property type="entry name" value="Rib_5P_isom_A"/>
    <property type="match status" value="1"/>
</dbReference>
<dbReference type="InterPro" id="IPR037171">
    <property type="entry name" value="NagB/RpiA_transferase-like"/>
</dbReference>
<dbReference type="InterPro" id="IPR020672">
    <property type="entry name" value="Ribose5P_isomerase_typA_subgr"/>
</dbReference>
<dbReference type="InterPro" id="IPR004788">
    <property type="entry name" value="Ribose5P_isomerase_type_A"/>
</dbReference>
<dbReference type="NCBIfam" id="NF001924">
    <property type="entry name" value="PRK00702.1"/>
    <property type="match status" value="1"/>
</dbReference>
<dbReference type="NCBIfam" id="TIGR00021">
    <property type="entry name" value="rpiA"/>
    <property type="match status" value="1"/>
</dbReference>
<dbReference type="PANTHER" id="PTHR11934">
    <property type="entry name" value="RIBOSE-5-PHOSPHATE ISOMERASE"/>
    <property type="match status" value="1"/>
</dbReference>
<dbReference type="PANTHER" id="PTHR11934:SF0">
    <property type="entry name" value="RIBOSE-5-PHOSPHATE ISOMERASE"/>
    <property type="match status" value="1"/>
</dbReference>
<dbReference type="Pfam" id="PF06026">
    <property type="entry name" value="Rib_5-P_isom_A"/>
    <property type="match status" value="1"/>
</dbReference>
<dbReference type="SUPFAM" id="SSF75445">
    <property type="entry name" value="D-ribose-5-phosphate isomerase (RpiA), lid domain"/>
    <property type="match status" value="1"/>
</dbReference>
<dbReference type="SUPFAM" id="SSF100950">
    <property type="entry name" value="NagB/RpiA/CoA transferase-like"/>
    <property type="match status" value="1"/>
</dbReference>
<protein>
    <recommendedName>
        <fullName evidence="1">Ribose-5-phosphate isomerase A</fullName>
        <ecNumber evidence="1">5.3.1.6</ecNumber>
    </recommendedName>
    <alternativeName>
        <fullName evidence="1">Phosphoriboisomerase A</fullName>
        <shortName evidence="1">PRI</shortName>
    </alternativeName>
</protein>
<comment type="function">
    <text evidence="1">Catalyzes the reversible conversion of ribose-5-phosphate to ribulose 5-phosphate.</text>
</comment>
<comment type="catalytic activity">
    <reaction evidence="1">
        <text>aldehydo-D-ribose 5-phosphate = D-ribulose 5-phosphate</text>
        <dbReference type="Rhea" id="RHEA:14657"/>
        <dbReference type="ChEBI" id="CHEBI:58121"/>
        <dbReference type="ChEBI" id="CHEBI:58273"/>
        <dbReference type="EC" id="5.3.1.6"/>
    </reaction>
</comment>
<comment type="pathway">
    <text evidence="1">Carbohydrate degradation; pentose phosphate pathway; D-ribose 5-phosphate from D-ribulose 5-phosphate (non-oxidative stage): step 1/1.</text>
</comment>
<comment type="subunit">
    <text evidence="1">Homodimer.</text>
</comment>
<comment type="similarity">
    <text evidence="1">Belongs to the ribose 5-phosphate isomerase family.</text>
</comment>
<organism>
    <name type="scientific">Haemophilus ducreyi (strain 35000HP / ATCC 700724)</name>
    <dbReference type="NCBI Taxonomy" id="233412"/>
    <lineage>
        <taxon>Bacteria</taxon>
        <taxon>Pseudomonadati</taxon>
        <taxon>Pseudomonadota</taxon>
        <taxon>Gammaproteobacteria</taxon>
        <taxon>Pasteurellales</taxon>
        <taxon>Pasteurellaceae</taxon>
        <taxon>Haemophilus</taxon>
    </lineage>
</organism>
<proteinExistence type="inferred from homology"/>